<reference key="1">
    <citation type="journal article" date="1999" name="Nature">
        <title>Sequence and analysis of chromosome 4 of the plant Arabidopsis thaliana.</title>
        <authorList>
            <person name="Mayer K.F.X."/>
            <person name="Schueller C."/>
            <person name="Wambutt R."/>
            <person name="Murphy G."/>
            <person name="Volckaert G."/>
            <person name="Pohl T."/>
            <person name="Duesterhoeft A."/>
            <person name="Stiekema W."/>
            <person name="Entian K.-D."/>
            <person name="Terryn N."/>
            <person name="Harris B."/>
            <person name="Ansorge W."/>
            <person name="Brandt P."/>
            <person name="Grivell L.A."/>
            <person name="Rieger M."/>
            <person name="Weichselgartner M."/>
            <person name="de Simone V."/>
            <person name="Obermaier B."/>
            <person name="Mache R."/>
            <person name="Mueller M."/>
            <person name="Kreis M."/>
            <person name="Delseny M."/>
            <person name="Puigdomenech P."/>
            <person name="Watson M."/>
            <person name="Schmidtheini T."/>
            <person name="Reichert B."/>
            <person name="Portetelle D."/>
            <person name="Perez-Alonso M."/>
            <person name="Boutry M."/>
            <person name="Bancroft I."/>
            <person name="Vos P."/>
            <person name="Hoheisel J."/>
            <person name="Zimmermann W."/>
            <person name="Wedler H."/>
            <person name="Ridley P."/>
            <person name="Langham S.-A."/>
            <person name="McCullagh B."/>
            <person name="Bilham L."/>
            <person name="Robben J."/>
            <person name="van der Schueren J."/>
            <person name="Grymonprez B."/>
            <person name="Chuang Y.-J."/>
            <person name="Vandenbussche F."/>
            <person name="Braeken M."/>
            <person name="Weltjens I."/>
            <person name="Voet M."/>
            <person name="Bastiaens I."/>
            <person name="Aert R."/>
            <person name="Defoor E."/>
            <person name="Weitzenegger T."/>
            <person name="Bothe G."/>
            <person name="Ramsperger U."/>
            <person name="Hilbert H."/>
            <person name="Braun M."/>
            <person name="Holzer E."/>
            <person name="Brandt A."/>
            <person name="Peters S."/>
            <person name="van Staveren M."/>
            <person name="Dirkse W."/>
            <person name="Mooijman P."/>
            <person name="Klein Lankhorst R."/>
            <person name="Rose M."/>
            <person name="Hauf J."/>
            <person name="Koetter P."/>
            <person name="Berneiser S."/>
            <person name="Hempel S."/>
            <person name="Feldpausch M."/>
            <person name="Lamberth S."/>
            <person name="Van den Daele H."/>
            <person name="De Keyser A."/>
            <person name="Buysshaert C."/>
            <person name="Gielen J."/>
            <person name="Villarroel R."/>
            <person name="De Clercq R."/>
            <person name="van Montagu M."/>
            <person name="Rogers J."/>
            <person name="Cronin A."/>
            <person name="Quail M.A."/>
            <person name="Bray-Allen S."/>
            <person name="Clark L."/>
            <person name="Doggett J."/>
            <person name="Hall S."/>
            <person name="Kay M."/>
            <person name="Lennard N."/>
            <person name="McLay K."/>
            <person name="Mayes R."/>
            <person name="Pettett A."/>
            <person name="Rajandream M.A."/>
            <person name="Lyne M."/>
            <person name="Benes V."/>
            <person name="Rechmann S."/>
            <person name="Borkova D."/>
            <person name="Bloecker H."/>
            <person name="Scharfe M."/>
            <person name="Grimm M."/>
            <person name="Loehnert T.-H."/>
            <person name="Dose S."/>
            <person name="de Haan M."/>
            <person name="Maarse A.C."/>
            <person name="Schaefer M."/>
            <person name="Mueller-Auer S."/>
            <person name="Gabel C."/>
            <person name="Fuchs M."/>
            <person name="Fartmann B."/>
            <person name="Granderath K."/>
            <person name="Dauner D."/>
            <person name="Herzl A."/>
            <person name="Neumann S."/>
            <person name="Argiriou A."/>
            <person name="Vitale D."/>
            <person name="Liguori R."/>
            <person name="Piravandi E."/>
            <person name="Massenet O."/>
            <person name="Quigley F."/>
            <person name="Clabauld G."/>
            <person name="Muendlein A."/>
            <person name="Felber R."/>
            <person name="Schnabl S."/>
            <person name="Hiller R."/>
            <person name="Schmidt W."/>
            <person name="Lecharny A."/>
            <person name="Aubourg S."/>
            <person name="Chefdor F."/>
            <person name="Cooke R."/>
            <person name="Berger C."/>
            <person name="Monfort A."/>
            <person name="Casacuberta E."/>
            <person name="Gibbons T."/>
            <person name="Weber N."/>
            <person name="Vandenbol M."/>
            <person name="Bargues M."/>
            <person name="Terol J."/>
            <person name="Torres A."/>
            <person name="Perez-Perez A."/>
            <person name="Purnelle B."/>
            <person name="Bent E."/>
            <person name="Johnson S."/>
            <person name="Tacon D."/>
            <person name="Jesse T."/>
            <person name="Heijnen L."/>
            <person name="Schwarz S."/>
            <person name="Scholler P."/>
            <person name="Heber S."/>
            <person name="Francs P."/>
            <person name="Bielke C."/>
            <person name="Frishman D."/>
            <person name="Haase D."/>
            <person name="Lemcke K."/>
            <person name="Mewes H.-W."/>
            <person name="Stocker S."/>
            <person name="Zaccaria P."/>
            <person name="Bevan M."/>
            <person name="Wilson R.K."/>
            <person name="de la Bastide M."/>
            <person name="Habermann K."/>
            <person name="Parnell L."/>
            <person name="Dedhia N."/>
            <person name="Gnoj L."/>
            <person name="Schutz K."/>
            <person name="Huang E."/>
            <person name="Spiegel L."/>
            <person name="Sekhon M."/>
            <person name="Murray J."/>
            <person name="Sheet P."/>
            <person name="Cordes M."/>
            <person name="Abu-Threideh J."/>
            <person name="Stoneking T."/>
            <person name="Kalicki J."/>
            <person name="Graves T."/>
            <person name="Harmon G."/>
            <person name="Edwards J."/>
            <person name="Latreille P."/>
            <person name="Courtney L."/>
            <person name="Cloud J."/>
            <person name="Abbott A."/>
            <person name="Scott K."/>
            <person name="Johnson D."/>
            <person name="Minx P."/>
            <person name="Bentley D."/>
            <person name="Fulton B."/>
            <person name="Miller N."/>
            <person name="Greco T."/>
            <person name="Kemp K."/>
            <person name="Kramer J."/>
            <person name="Fulton L."/>
            <person name="Mardis E."/>
            <person name="Dante M."/>
            <person name="Pepin K."/>
            <person name="Hillier L.W."/>
            <person name="Nelson J."/>
            <person name="Spieth J."/>
            <person name="Ryan E."/>
            <person name="Andrews S."/>
            <person name="Geisel C."/>
            <person name="Layman D."/>
            <person name="Du H."/>
            <person name="Ali J."/>
            <person name="Berghoff A."/>
            <person name="Jones K."/>
            <person name="Drone K."/>
            <person name="Cotton M."/>
            <person name="Joshu C."/>
            <person name="Antonoiu B."/>
            <person name="Zidanic M."/>
            <person name="Strong C."/>
            <person name="Sun H."/>
            <person name="Lamar B."/>
            <person name="Yordan C."/>
            <person name="Ma P."/>
            <person name="Zhong J."/>
            <person name="Preston R."/>
            <person name="Vil D."/>
            <person name="Shekher M."/>
            <person name="Matero A."/>
            <person name="Shah R."/>
            <person name="Swaby I.K."/>
            <person name="O'Shaughnessy A."/>
            <person name="Rodriguez M."/>
            <person name="Hoffman J."/>
            <person name="Till S."/>
            <person name="Granat S."/>
            <person name="Shohdy N."/>
            <person name="Hasegawa A."/>
            <person name="Hameed A."/>
            <person name="Lodhi M."/>
            <person name="Johnson A."/>
            <person name="Chen E."/>
            <person name="Marra M.A."/>
            <person name="Martienssen R."/>
            <person name="McCombie W.R."/>
        </authorList>
    </citation>
    <scope>NUCLEOTIDE SEQUENCE [LARGE SCALE GENOMIC DNA]</scope>
    <source>
        <strain>cv. Columbia</strain>
    </source>
</reference>
<reference key="2">
    <citation type="journal article" date="2017" name="Plant J.">
        <title>Araport11: a complete reannotation of the Arabidopsis thaliana reference genome.</title>
        <authorList>
            <person name="Cheng C.Y."/>
            <person name="Krishnakumar V."/>
            <person name="Chan A.P."/>
            <person name="Thibaud-Nissen F."/>
            <person name="Schobel S."/>
            <person name="Town C.D."/>
        </authorList>
    </citation>
    <scope>GENOME REANNOTATION</scope>
    <source>
        <strain>cv. Columbia</strain>
    </source>
</reference>
<reference key="3">
    <citation type="journal article" date="2003" name="Science">
        <title>Empirical analysis of transcriptional activity in the Arabidopsis genome.</title>
        <authorList>
            <person name="Yamada K."/>
            <person name="Lim J."/>
            <person name="Dale J.M."/>
            <person name="Chen H."/>
            <person name="Shinn P."/>
            <person name="Palm C.J."/>
            <person name="Southwick A.M."/>
            <person name="Wu H.C."/>
            <person name="Kim C.J."/>
            <person name="Nguyen M."/>
            <person name="Pham P.K."/>
            <person name="Cheuk R.F."/>
            <person name="Karlin-Newmann G."/>
            <person name="Liu S.X."/>
            <person name="Lam B."/>
            <person name="Sakano H."/>
            <person name="Wu T."/>
            <person name="Yu G."/>
            <person name="Miranda M."/>
            <person name="Quach H.L."/>
            <person name="Tripp M."/>
            <person name="Chang C.H."/>
            <person name="Lee J.M."/>
            <person name="Toriumi M.J."/>
            <person name="Chan M.M."/>
            <person name="Tang C.C."/>
            <person name="Onodera C.S."/>
            <person name="Deng J.M."/>
            <person name="Akiyama K."/>
            <person name="Ansari Y."/>
            <person name="Arakawa T."/>
            <person name="Banh J."/>
            <person name="Banno F."/>
            <person name="Bowser L."/>
            <person name="Brooks S.Y."/>
            <person name="Carninci P."/>
            <person name="Chao Q."/>
            <person name="Choy N."/>
            <person name="Enju A."/>
            <person name="Goldsmith A.D."/>
            <person name="Gurjal M."/>
            <person name="Hansen N.F."/>
            <person name="Hayashizaki Y."/>
            <person name="Johnson-Hopson C."/>
            <person name="Hsuan V.W."/>
            <person name="Iida K."/>
            <person name="Karnes M."/>
            <person name="Khan S."/>
            <person name="Koesema E."/>
            <person name="Ishida J."/>
            <person name="Jiang P.X."/>
            <person name="Jones T."/>
            <person name="Kawai J."/>
            <person name="Kamiya A."/>
            <person name="Meyers C."/>
            <person name="Nakajima M."/>
            <person name="Narusaka M."/>
            <person name="Seki M."/>
            <person name="Sakurai T."/>
            <person name="Satou M."/>
            <person name="Tamse R."/>
            <person name="Vaysberg M."/>
            <person name="Wallender E.K."/>
            <person name="Wong C."/>
            <person name="Yamamura Y."/>
            <person name="Yuan S."/>
            <person name="Shinozaki K."/>
            <person name="Davis R.W."/>
            <person name="Theologis A."/>
            <person name="Ecker J.R."/>
        </authorList>
    </citation>
    <scope>NUCLEOTIDE SEQUENCE [LARGE SCALE MRNA]</scope>
    <source>
        <strain>cv. Columbia</strain>
    </source>
</reference>
<reference key="4">
    <citation type="journal article" date="2000" name="Plant Physiol.">
        <title>The ubiquitin-specific protease family from Arabidopsis. AtUBP1 and 2 are required for the resistance to the amino acid analog canavanine.</title>
        <authorList>
            <person name="Yan N."/>
            <person name="Doelling J.H."/>
            <person name="Falbel T.G."/>
            <person name="Durski A.M."/>
            <person name="Vierstra R.D."/>
        </authorList>
    </citation>
    <scope>GENE FAMILY ORGANIZATION</scope>
    <scope>NOMENCLATURE</scope>
</reference>
<proteinExistence type="evidence at transcript level"/>
<feature type="chain" id="PRO_0000313037" description="Ubiquitin carboxyl-terminal hydrolase 10">
    <location>
        <begin position="1"/>
        <end position="923"/>
    </location>
</feature>
<feature type="domain" description="DUSP" evidence="2">
    <location>
        <begin position="19"/>
        <end position="134"/>
    </location>
</feature>
<feature type="domain" description="USP">
    <location>
        <begin position="304"/>
        <end position="895"/>
    </location>
</feature>
<feature type="region of interest" description="Disordered" evidence="5">
    <location>
        <begin position="65"/>
        <end position="91"/>
    </location>
</feature>
<feature type="active site" description="Nucleophile" evidence="3 4">
    <location>
        <position position="313"/>
    </location>
</feature>
<feature type="active site" description="Proton acceptor" evidence="3 4">
    <location>
        <position position="853"/>
    </location>
</feature>
<accession>Q9ZSB5</accession>
<accession>Q9T0B6</accession>
<evidence type="ECO:0000250" key="1"/>
<evidence type="ECO:0000255" key="2">
    <source>
        <dbReference type="PROSITE-ProRule" id="PRU00613"/>
    </source>
</evidence>
<evidence type="ECO:0000255" key="3">
    <source>
        <dbReference type="PROSITE-ProRule" id="PRU10092"/>
    </source>
</evidence>
<evidence type="ECO:0000255" key="4">
    <source>
        <dbReference type="PROSITE-ProRule" id="PRU10093"/>
    </source>
</evidence>
<evidence type="ECO:0000256" key="5">
    <source>
        <dbReference type="SAM" id="MobiDB-lite"/>
    </source>
</evidence>
<evidence type="ECO:0000305" key="6"/>
<sequence length="923" mass="103699">MTIPNSDFMLENGVCDLPFTPEEEKRIVSELTSESEDNLKQGNLYFVISKRWYTSWQEYVENSANECSTGESSEAPRPGPIDNHDIIESDSDINDPQLRRLLVEGEDYVLVPKQVWKRLVEWYSGGPPIERKLICQGFYTRSYSVEVYPLCLMLTDGRDESRTVIRLGKQASIRELYEKVCAMTGVPQEKAHIWDYFDKRKNGLLDPLSYKSLEESSLHMDQDILVEVDGLSSSSQSAMSSTGNELALVPLEPSRSIVTIAGGPTLSNGHSTTSNFSLFPRITSEDDGRDSLSILGKGEKGGLAGLSNLGNTCFMNSALQCLAHTPPIVEYFLQDYSDDINRDNPLGMCGELAIAFGDLLKKLWSSGRNAVAPRAFKTKLARFAPQFSGYNQHDSQELLAFLLDGLHEDLNKVKRKPYIELKDSDSRPDDEVAEELWNYHKARNDSVIVDVCQGQYKSTLVCPVCGKISITFDPFMYLSVPLPSTLTRSMTITVFYCDGSRLPMPYTVIVPKQGSIRDLITALGTACCLAEDESLLLAEVYDHKIFRYFEIPLDSLSAIKDDEHIVAYRLNQIPKGSRKAKLEILHGGQERAVLDSVRGSDVKLFGTPFVTYVNTEPLSGTDIDAVISGFLSPLHKVHAPSKIHNGSDNGHLADATVDQASGILSSPDTEIDNASDRELSFRIFLTDERGLNIKPLQSESSISPGTVTRVLVEWNEGEHERYDSSYLSDLPEVHKTSFSAKKTRQESISLFSCLEAFLAEEPLGPDDMWFCPSCKEHRQANKKLDLWKLPDILVFHLKRFTYSRYLKNKIDTFVNFPVHDLDLSKYVKNKNGQSYLYELYAVSNHYGGLGGGHYTAYAKLIDDNKWYHFDDSHVSSVNESEIRNSAAYVLFYRRVRSETETQTAEMSTDMDYSCLNSHNDKAS</sequence>
<dbReference type="EC" id="3.4.19.12"/>
<dbReference type="EMBL" id="AF118222">
    <property type="protein sequence ID" value="AAD03433.1"/>
    <property type="status" value="ALT_SEQ"/>
    <property type="molecule type" value="Genomic_DNA"/>
</dbReference>
<dbReference type="EMBL" id="AL049523">
    <property type="protein sequence ID" value="CAB40023.1"/>
    <property type="status" value="ALT_SEQ"/>
    <property type="molecule type" value="Genomic_DNA"/>
</dbReference>
<dbReference type="EMBL" id="AL161517">
    <property type="protein sequence ID" value="CAB78180.1"/>
    <property type="status" value="ALT_SEQ"/>
    <property type="molecule type" value="Genomic_DNA"/>
</dbReference>
<dbReference type="EMBL" id="CP002687">
    <property type="protein sequence ID" value="AEE82900.1"/>
    <property type="molecule type" value="Genomic_DNA"/>
</dbReference>
<dbReference type="EMBL" id="BT004132">
    <property type="status" value="NOT_ANNOTATED_CDS"/>
    <property type="molecule type" value="mRNA"/>
</dbReference>
<dbReference type="PIR" id="T04192">
    <property type="entry name" value="T04192"/>
</dbReference>
<dbReference type="RefSeq" id="NP_192795.3">
    <property type="nucleotide sequence ID" value="NM_117125.4"/>
</dbReference>
<dbReference type="SMR" id="Q9ZSB5"/>
<dbReference type="FunCoup" id="Q9ZSB5">
    <property type="interactions" value="4010"/>
</dbReference>
<dbReference type="STRING" id="3702.Q9ZSB5"/>
<dbReference type="MEROPS" id="C19.A02"/>
<dbReference type="iPTMnet" id="Q9ZSB5"/>
<dbReference type="PaxDb" id="3702-AT4G10570.1"/>
<dbReference type="ProteomicsDB" id="228465"/>
<dbReference type="EnsemblPlants" id="AT4G10570.1">
    <property type="protein sequence ID" value="AT4G10570.1"/>
    <property type="gene ID" value="AT4G10570"/>
</dbReference>
<dbReference type="GeneID" id="826649"/>
<dbReference type="Gramene" id="AT4G10570.1">
    <property type="protein sequence ID" value="AT4G10570.1"/>
    <property type="gene ID" value="AT4G10570"/>
</dbReference>
<dbReference type="KEGG" id="ath:AT4G10570"/>
<dbReference type="Araport" id="AT4G10570"/>
<dbReference type="TAIR" id="AT4G10570">
    <property type="gene designation" value="UBP9"/>
</dbReference>
<dbReference type="eggNOG" id="KOG1870">
    <property type="taxonomic scope" value="Eukaryota"/>
</dbReference>
<dbReference type="HOGENOM" id="CLU_001060_7_1_1"/>
<dbReference type="InParanoid" id="Q9ZSB5"/>
<dbReference type="OMA" id="PCHAQQS"/>
<dbReference type="PhylomeDB" id="Q9ZSB5"/>
<dbReference type="PRO" id="PR:Q9ZSB5"/>
<dbReference type="Proteomes" id="UP000006548">
    <property type="component" value="Chromosome 4"/>
</dbReference>
<dbReference type="ExpressionAtlas" id="Q9ZSB5">
    <property type="expression patterns" value="baseline and differential"/>
</dbReference>
<dbReference type="GO" id="GO:0004843">
    <property type="term" value="F:cysteine-type deubiquitinase activity"/>
    <property type="evidence" value="ECO:0007669"/>
    <property type="project" value="UniProtKB-EC"/>
</dbReference>
<dbReference type="GO" id="GO:0016579">
    <property type="term" value="P:protein deubiquitination"/>
    <property type="evidence" value="ECO:0007669"/>
    <property type="project" value="InterPro"/>
</dbReference>
<dbReference type="GO" id="GO:0006508">
    <property type="term" value="P:proteolysis"/>
    <property type="evidence" value="ECO:0007669"/>
    <property type="project" value="UniProtKB-KW"/>
</dbReference>
<dbReference type="CDD" id="cd02674">
    <property type="entry name" value="Peptidase_C19R"/>
    <property type="match status" value="1"/>
</dbReference>
<dbReference type="Gene3D" id="3.90.70.10">
    <property type="entry name" value="Cysteine proteinases"/>
    <property type="match status" value="2"/>
</dbReference>
<dbReference type="Gene3D" id="3.30.2230.10">
    <property type="entry name" value="DUSP-like"/>
    <property type="match status" value="1"/>
</dbReference>
<dbReference type="Gene3D" id="3.10.20.90">
    <property type="entry name" value="Phosphatidylinositol 3-kinase Catalytic Subunit, Chain A, domain 1"/>
    <property type="match status" value="1"/>
</dbReference>
<dbReference type="InterPro" id="IPR035927">
    <property type="entry name" value="DUSP-like_sf"/>
</dbReference>
<dbReference type="InterPro" id="IPR038765">
    <property type="entry name" value="Papain-like_cys_pep_sf"/>
</dbReference>
<dbReference type="InterPro" id="IPR006615">
    <property type="entry name" value="Pept_C19_DUSP"/>
</dbReference>
<dbReference type="InterPro" id="IPR001394">
    <property type="entry name" value="Peptidase_C19_UCH"/>
</dbReference>
<dbReference type="InterPro" id="IPR050185">
    <property type="entry name" value="Ub_carboxyl-term_hydrolase"/>
</dbReference>
<dbReference type="InterPro" id="IPR018200">
    <property type="entry name" value="USP_CS"/>
</dbReference>
<dbReference type="InterPro" id="IPR028889">
    <property type="entry name" value="USP_dom"/>
</dbReference>
<dbReference type="PANTHER" id="PTHR21646">
    <property type="entry name" value="UBIQUITIN CARBOXYL-TERMINAL HYDROLASE"/>
    <property type="match status" value="1"/>
</dbReference>
<dbReference type="PANTHER" id="PTHR21646:SF46">
    <property type="entry name" value="UBIQUITIN CARBOXYL-TERMINAL HYDROLASE"/>
    <property type="match status" value="1"/>
</dbReference>
<dbReference type="Pfam" id="PF06337">
    <property type="entry name" value="DUSP"/>
    <property type="match status" value="1"/>
</dbReference>
<dbReference type="Pfam" id="PF00443">
    <property type="entry name" value="UCH"/>
    <property type="match status" value="1"/>
</dbReference>
<dbReference type="SMART" id="SM00695">
    <property type="entry name" value="DUSP"/>
    <property type="match status" value="1"/>
</dbReference>
<dbReference type="SUPFAM" id="SSF54001">
    <property type="entry name" value="Cysteine proteinases"/>
    <property type="match status" value="1"/>
</dbReference>
<dbReference type="SUPFAM" id="SSF143791">
    <property type="entry name" value="DUSP-like"/>
    <property type="match status" value="1"/>
</dbReference>
<dbReference type="PROSITE" id="PS51283">
    <property type="entry name" value="DUSP"/>
    <property type="match status" value="1"/>
</dbReference>
<dbReference type="PROSITE" id="PS00972">
    <property type="entry name" value="USP_1"/>
    <property type="match status" value="1"/>
</dbReference>
<dbReference type="PROSITE" id="PS00973">
    <property type="entry name" value="USP_2"/>
    <property type="match status" value="1"/>
</dbReference>
<dbReference type="PROSITE" id="PS50235">
    <property type="entry name" value="USP_3"/>
    <property type="match status" value="1"/>
</dbReference>
<name>UBP10_ARATH</name>
<keyword id="KW-0378">Hydrolase</keyword>
<keyword id="KW-0645">Protease</keyword>
<keyword id="KW-1185">Reference proteome</keyword>
<keyword id="KW-0788">Thiol protease</keyword>
<keyword id="KW-0833">Ubl conjugation pathway</keyword>
<protein>
    <recommendedName>
        <fullName>Ubiquitin carboxyl-terminal hydrolase 10</fullName>
        <ecNumber>3.4.19.12</ecNumber>
    </recommendedName>
    <alternativeName>
        <fullName>Deubiquitinating enzyme 10</fullName>
        <shortName>AtUBP10</shortName>
    </alternativeName>
    <alternativeName>
        <fullName>Ubiquitin thioesterase 10</fullName>
    </alternativeName>
    <alternativeName>
        <fullName>Ubiquitin-specific-processing protease 10</fullName>
    </alternativeName>
</protein>
<gene>
    <name type="primary">UBP10</name>
    <name type="ordered locus">At4g10570</name>
    <name type="ORF">F3H7.5</name>
    <name type="ORF">T4F9.30</name>
</gene>
<comment type="function">
    <text evidence="1">Recognizes and hydrolyzes the peptide bond at the C-terminal Gly of ubiquitin. Involved in the processing of poly-ubiquitin precursors as well as that of ubiquitinated proteins (By similarity).</text>
</comment>
<comment type="catalytic activity">
    <reaction>
        <text>Thiol-dependent hydrolysis of ester, thioester, amide, peptide and isopeptide bonds formed by the C-terminal Gly of ubiquitin (a 76-residue protein attached to proteins as an intracellular targeting signal).</text>
        <dbReference type="EC" id="3.4.19.12"/>
    </reaction>
</comment>
<comment type="similarity">
    <text evidence="6">Belongs to the peptidase C19 family.</text>
</comment>
<comment type="sequence caution" evidence="6">
    <conflict type="erroneous gene model prediction">
        <sequence resource="EMBL-CDS" id="AAD03433"/>
    </conflict>
</comment>
<comment type="sequence caution" evidence="6">
    <conflict type="frameshift">
        <sequence resource="EMBL" id="BT004132"/>
    </conflict>
</comment>
<comment type="sequence caution" evidence="6">
    <conflict type="erroneous gene model prediction">
        <sequence resource="EMBL-CDS" id="CAB40023"/>
    </conflict>
</comment>
<comment type="sequence caution" evidence="6">
    <conflict type="erroneous gene model prediction">
        <sequence resource="EMBL-CDS" id="CAB78180"/>
    </conflict>
</comment>
<organism>
    <name type="scientific">Arabidopsis thaliana</name>
    <name type="common">Mouse-ear cress</name>
    <dbReference type="NCBI Taxonomy" id="3702"/>
    <lineage>
        <taxon>Eukaryota</taxon>
        <taxon>Viridiplantae</taxon>
        <taxon>Streptophyta</taxon>
        <taxon>Embryophyta</taxon>
        <taxon>Tracheophyta</taxon>
        <taxon>Spermatophyta</taxon>
        <taxon>Magnoliopsida</taxon>
        <taxon>eudicotyledons</taxon>
        <taxon>Gunneridae</taxon>
        <taxon>Pentapetalae</taxon>
        <taxon>rosids</taxon>
        <taxon>malvids</taxon>
        <taxon>Brassicales</taxon>
        <taxon>Brassicaceae</taxon>
        <taxon>Camelineae</taxon>
        <taxon>Arabidopsis</taxon>
    </lineage>
</organism>